<dbReference type="EMBL" id="AM398681">
    <property type="protein sequence ID" value="CAL42547.1"/>
    <property type="molecule type" value="Genomic_DNA"/>
</dbReference>
<dbReference type="RefSeq" id="WP_011962605.1">
    <property type="nucleotide sequence ID" value="NC_009613.3"/>
</dbReference>
<dbReference type="RefSeq" id="YP_001295365.1">
    <property type="nucleotide sequence ID" value="NC_009613.3"/>
</dbReference>
<dbReference type="SMR" id="A6GWS4"/>
<dbReference type="STRING" id="402612.FP0436"/>
<dbReference type="EnsemblBacteria" id="CAL42547">
    <property type="protein sequence ID" value="CAL42547"/>
    <property type="gene ID" value="FP0436"/>
</dbReference>
<dbReference type="GeneID" id="66551573"/>
<dbReference type="KEGG" id="fps:FP0436"/>
<dbReference type="PATRIC" id="fig|402612.5.peg.450"/>
<dbReference type="eggNOG" id="COG0233">
    <property type="taxonomic scope" value="Bacteria"/>
</dbReference>
<dbReference type="HOGENOM" id="CLU_073981_2_0_10"/>
<dbReference type="OrthoDB" id="9804006at2"/>
<dbReference type="Proteomes" id="UP000006394">
    <property type="component" value="Chromosome"/>
</dbReference>
<dbReference type="GO" id="GO:0005737">
    <property type="term" value="C:cytoplasm"/>
    <property type="evidence" value="ECO:0007669"/>
    <property type="project" value="UniProtKB-SubCell"/>
</dbReference>
<dbReference type="GO" id="GO:0043023">
    <property type="term" value="F:ribosomal large subunit binding"/>
    <property type="evidence" value="ECO:0007669"/>
    <property type="project" value="TreeGrafter"/>
</dbReference>
<dbReference type="GO" id="GO:0006415">
    <property type="term" value="P:translational termination"/>
    <property type="evidence" value="ECO:0007669"/>
    <property type="project" value="UniProtKB-UniRule"/>
</dbReference>
<dbReference type="CDD" id="cd00520">
    <property type="entry name" value="RRF"/>
    <property type="match status" value="1"/>
</dbReference>
<dbReference type="FunFam" id="1.10.132.20:FF:000001">
    <property type="entry name" value="Ribosome-recycling factor"/>
    <property type="match status" value="1"/>
</dbReference>
<dbReference type="FunFam" id="3.30.1360.40:FF:000001">
    <property type="entry name" value="Ribosome-recycling factor"/>
    <property type="match status" value="1"/>
</dbReference>
<dbReference type="Gene3D" id="3.30.1360.40">
    <property type="match status" value="1"/>
</dbReference>
<dbReference type="Gene3D" id="1.10.132.20">
    <property type="entry name" value="Ribosome-recycling factor"/>
    <property type="match status" value="1"/>
</dbReference>
<dbReference type="HAMAP" id="MF_00040">
    <property type="entry name" value="RRF"/>
    <property type="match status" value="1"/>
</dbReference>
<dbReference type="InterPro" id="IPR002661">
    <property type="entry name" value="Ribosome_recyc_fac"/>
</dbReference>
<dbReference type="InterPro" id="IPR023584">
    <property type="entry name" value="Ribosome_recyc_fac_dom"/>
</dbReference>
<dbReference type="InterPro" id="IPR036191">
    <property type="entry name" value="RRF_sf"/>
</dbReference>
<dbReference type="NCBIfam" id="TIGR00496">
    <property type="entry name" value="frr"/>
    <property type="match status" value="1"/>
</dbReference>
<dbReference type="PANTHER" id="PTHR20982:SF3">
    <property type="entry name" value="MITOCHONDRIAL RIBOSOME RECYCLING FACTOR PSEUDO 1"/>
    <property type="match status" value="1"/>
</dbReference>
<dbReference type="PANTHER" id="PTHR20982">
    <property type="entry name" value="RIBOSOME RECYCLING FACTOR"/>
    <property type="match status" value="1"/>
</dbReference>
<dbReference type="Pfam" id="PF01765">
    <property type="entry name" value="RRF"/>
    <property type="match status" value="1"/>
</dbReference>
<dbReference type="SUPFAM" id="SSF55194">
    <property type="entry name" value="Ribosome recycling factor, RRF"/>
    <property type="match status" value="1"/>
</dbReference>
<gene>
    <name evidence="1" type="primary">frr</name>
    <name type="ordered locus">FP0436</name>
</gene>
<proteinExistence type="inferred from homology"/>
<accession>A6GWS4</accession>
<feature type="chain" id="PRO_0000341011" description="Ribosome-recycling factor">
    <location>
        <begin position="1"/>
        <end position="187"/>
    </location>
</feature>
<comment type="function">
    <text evidence="1">Responsible for the release of ribosomes from messenger RNA at the termination of protein biosynthesis. May increase the efficiency of translation by recycling ribosomes from one round of translation to another.</text>
</comment>
<comment type="subcellular location">
    <subcellularLocation>
        <location evidence="1">Cytoplasm</location>
    </subcellularLocation>
</comment>
<comment type="similarity">
    <text evidence="1">Belongs to the RRF family.</text>
</comment>
<sequence length="187" mass="20772">MTEEIDFILDSTKESMEGSIAHLEKEFLNIRAGKASPAMLGSVFVDYYGSATPLSQVAKISVPDARTITLQPFEKNMLQVIEKAIMIANIGFNPMNNGDVIIISVPPLTEERRRELAKQAKTEAEDAKIGVRNVRKDSNSDIKKLEKEGTSEDACKIAEESVQKLTDSFIRKVDELLVVKEAEIMKV</sequence>
<evidence type="ECO:0000255" key="1">
    <source>
        <dbReference type="HAMAP-Rule" id="MF_00040"/>
    </source>
</evidence>
<reference key="1">
    <citation type="journal article" date="2007" name="Nat. Biotechnol.">
        <title>Complete genome sequence of the fish pathogen Flavobacterium psychrophilum.</title>
        <authorList>
            <person name="Duchaud E."/>
            <person name="Boussaha M."/>
            <person name="Loux V."/>
            <person name="Bernardet J.-F."/>
            <person name="Michel C."/>
            <person name="Kerouault B."/>
            <person name="Mondot S."/>
            <person name="Nicolas P."/>
            <person name="Bossy R."/>
            <person name="Caron C."/>
            <person name="Bessieres P."/>
            <person name="Gibrat J.-F."/>
            <person name="Claverol S."/>
            <person name="Dumetz F."/>
            <person name="Le Henaff M."/>
            <person name="Benmansour A."/>
        </authorList>
    </citation>
    <scope>NUCLEOTIDE SEQUENCE [LARGE SCALE GENOMIC DNA]</scope>
    <source>
        <strain>ATCC 49511 / DSM 21280 / CIP 103535 / JIP02/86</strain>
    </source>
</reference>
<organism>
    <name type="scientific">Flavobacterium psychrophilum (strain ATCC 49511 / DSM 21280 / CIP 103535 / JIP02/86)</name>
    <dbReference type="NCBI Taxonomy" id="402612"/>
    <lineage>
        <taxon>Bacteria</taxon>
        <taxon>Pseudomonadati</taxon>
        <taxon>Bacteroidota</taxon>
        <taxon>Flavobacteriia</taxon>
        <taxon>Flavobacteriales</taxon>
        <taxon>Flavobacteriaceae</taxon>
        <taxon>Flavobacterium</taxon>
    </lineage>
</organism>
<name>RRF_FLAPJ</name>
<protein>
    <recommendedName>
        <fullName evidence="1">Ribosome-recycling factor</fullName>
        <shortName evidence="1">RRF</shortName>
    </recommendedName>
    <alternativeName>
        <fullName evidence="1">Ribosome-releasing factor</fullName>
    </alternativeName>
</protein>
<keyword id="KW-0963">Cytoplasm</keyword>
<keyword id="KW-0648">Protein biosynthesis</keyword>
<keyword id="KW-1185">Reference proteome</keyword>